<sequence length="741" mass="81247">MNRIDAHGLKIAPVLFDFIAGEATLRTGIKPDAFWAGLAAIVRDLGPRNRELLAVRDRLQARIDDWHRIHKDTPFDISAYTAFLTEIGYLEPEPETRQIETANVDDEIGKICGPQLVVPLTNARYALNAANARWGSLYDALYGTDAIAREAGEAKGYDKARGDKVIARAKAFLDMATPLANGAHADVAGYSVLNGRLSVTLRNGDTTGLKAETQFAGYQGDANAPSAILLVNHGLHIDIQIDRAHPIGRHYSAGVADVIIEAAISTILDMEDSVAAVDADDKVLVYRNALGLMNGTLTDTFEKSGKTLTRALNPDRVYTAPDGGQLTLHGRSLLLIRNVGHHMFTDAVLDQRGAEIPEGLLDAAISGLLAIHDINGVSKRRNSRSGSLYLVKPKMHGPDEVALTCELFARVEAMLGLRENTLKIGIMDEERRTTVNLNACIQTASKRVCFINTGFLDRTGDEIHTSMEAGPMIRKGEMKTQPWIKAYEDWNVDIGLIEGLPGRAQIGKGMWAAPDRMADMLAQKINHPEAGATTAWVPSPTAATLHALHYHQIDVRKRQQELKAGGRRARLSDLLTIPVSHSNWPPEDVKQEIDNNCQGILGYVVRWIDQGVGCSKVPDIHDVGLMEDRATLRISSQHLANWLHHGVVTHDQVMDSFKRMAVIVDEQNAGDPLYKPMAPGFDSVAFKAACDLVFRGREQPNGYTEHILTERRREAKLMAQAARAFSGEADTGSPRENATRQ</sequence>
<dbReference type="EC" id="2.3.3.9" evidence="1"/>
<dbReference type="EMBL" id="CP000115">
    <property type="protein sequence ID" value="ABA06018.1"/>
    <property type="molecule type" value="Genomic_DNA"/>
</dbReference>
<dbReference type="RefSeq" id="WP_011315963.1">
    <property type="nucleotide sequence ID" value="NC_007406.1"/>
</dbReference>
<dbReference type="SMR" id="Q3SNX3"/>
<dbReference type="STRING" id="323098.Nwi_2765"/>
<dbReference type="KEGG" id="nwi:Nwi_2765"/>
<dbReference type="eggNOG" id="COG2225">
    <property type="taxonomic scope" value="Bacteria"/>
</dbReference>
<dbReference type="HOGENOM" id="CLU_028446_1_0_5"/>
<dbReference type="OrthoDB" id="9762054at2"/>
<dbReference type="UniPathway" id="UPA00703">
    <property type="reaction ID" value="UER00720"/>
</dbReference>
<dbReference type="Proteomes" id="UP000002531">
    <property type="component" value="Chromosome"/>
</dbReference>
<dbReference type="GO" id="GO:0005829">
    <property type="term" value="C:cytosol"/>
    <property type="evidence" value="ECO:0007669"/>
    <property type="project" value="TreeGrafter"/>
</dbReference>
<dbReference type="GO" id="GO:0000287">
    <property type="term" value="F:magnesium ion binding"/>
    <property type="evidence" value="ECO:0007669"/>
    <property type="project" value="TreeGrafter"/>
</dbReference>
<dbReference type="GO" id="GO:0004474">
    <property type="term" value="F:malate synthase activity"/>
    <property type="evidence" value="ECO:0007669"/>
    <property type="project" value="UniProtKB-UniRule"/>
</dbReference>
<dbReference type="GO" id="GO:0009436">
    <property type="term" value="P:glyoxylate catabolic process"/>
    <property type="evidence" value="ECO:0007669"/>
    <property type="project" value="TreeGrafter"/>
</dbReference>
<dbReference type="GO" id="GO:0006097">
    <property type="term" value="P:glyoxylate cycle"/>
    <property type="evidence" value="ECO:0007669"/>
    <property type="project" value="UniProtKB-UniRule"/>
</dbReference>
<dbReference type="GO" id="GO:0006099">
    <property type="term" value="P:tricarboxylic acid cycle"/>
    <property type="evidence" value="ECO:0007669"/>
    <property type="project" value="UniProtKB-KW"/>
</dbReference>
<dbReference type="FunFam" id="3.20.20.360:FF:000002">
    <property type="entry name" value="Malate synthase G"/>
    <property type="match status" value="1"/>
</dbReference>
<dbReference type="Gene3D" id="3.20.20.360">
    <property type="entry name" value="Malate synthase, domain 3"/>
    <property type="match status" value="2"/>
</dbReference>
<dbReference type="Gene3D" id="1.20.1220.12">
    <property type="entry name" value="Malate synthase, domain III"/>
    <property type="match status" value="1"/>
</dbReference>
<dbReference type="HAMAP" id="MF_00641">
    <property type="entry name" value="Malate_synth_G"/>
    <property type="match status" value="1"/>
</dbReference>
<dbReference type="InterPro" id="IPR044856">
    <property type="entry name" value="Malate_synth_C_sf"/>
</dbReference>
<dbReference type="InterPro" id="IPR011076">
    <property type="entry name" value="Malate_synth_sf"/>
</dbReference>
<dbReference type="InterPro" id="IPR001465">
    <property type="entry name" value="Malate_synthase_TIM"/>
</dbReference>
<dbReference type="InterPro" id="IPR006253">
    <property type="entry name" value="Malate_synthG"/>
</dbReference>
<dbReference type="InterPro" id="IPR048355">
    <property type="entry name" value="MS_C"/>
</dbReference>
<dbReference type="InterPro" id="IPR048356">
    <property type="entry name" value="MS_N"/>
</dbReference>
<dbReference type="InterPro" id="IPR046363">
    <property type="entry name" value="MS_N_TIM-barrel_dom"/>
</dbReference>
<dbReference type="InterPro" id="IPR048357">
    <property type="entry name" value="MSG_insertion"/>
</dbReference>
<dbReference type="NCBIfam" id="TIGR01345">
    <property type="entry name" value="malate_syn_G"/>
    <property type="match status" value="1"/>
</dbReference>
<dbReference type="NCBIfam" id="NF002825">
    <property type="entry name" value="PRK02999.1"/>
    <property type="match status" value="1"/>
</dbReference>
<dbReference type="PANTHER" id="PTHR42739">
    <property type="entry name" value="MALATE SYNTHASE G"/>
    <property type="match status" value="1"/>
</dbReference>
<dbReference type="PANTHER" id="PTHR42739:SF1">
    <property type="entry name" value="MALATE SYNTHASE G"/>
    <property type="match status" value="1"/>
</dbReference>
<dbReference type="Pfam" id="PF20659">
    <property type="entry name" value="MS_C"/>
    <property type="match status" value="1"/>
</dbReference>
<dbReference type="Pfam" id="PF20656">
    <property type="entry name" value="MS_N"/>
    <property type="match status" value="1"/>
</dbReference>
<dbReference type="Pfam" id="PF01274">
    <property type="entry name" value="MS_TIM-barrel"/>
    <property type="match status" value="1"/>
</dbReference>
<dbReference type="Pfam" id="PF20658">
    <property type="entry name" value="MSG_insertion"/>
    <property type="match status" value="1"/>
</dbReference>
<dbReference type="SUPFAM" id="SSF51645">
    <property type="entry name" value="Malate synthase G"/>
    <property type="match status" value="1"/>
</dbReference>
<feature type="chain" id="PRO_1000056914" description="Malate synthase G">
    <location>
        <begin position="1"/>
        <end position="741"/>
    </location>
</feature>
<feature type="active site" description="Proton acceptor" evidence="1">
    <location>
        <position position="337"/>
    </location>
</feature>
<feature type="active site" description="Proton donor" evidence="1">
    <location>
        <position position="628"/>
    </location>
</feature>
<feature type="binding site" evidence="1">
    <location>
        <position position="117"/>
    </location>
    <ligand>
        <name>acetyl-CoA</name>
        <dbReference type="ChEBI" id="CHEBI:57288"/>
    </ligand>
</feature>
<feature type="binding site" evidence="1">
    <location>
        <begin position="124"/>
        <end position="125"/>
    </location>
    <ligand>
        <name>acetyl-CoA</name>
        <dbReference type="ChEBI" id="CHEBI:57288"/>
    </ligand>
</feature>
<feature type="binding site" evidence="1">
    <location>
        <position position="273"/>
    </location>
    <ligand>
        <name>acetyl-CoA</name>
        <dbReference type="ChEBI" id="CHEBI:57288"/>
    </ligand>
</feature>
<feature type="binding site" evidence="1">
    <location>
        <position position="310"/>
    </location>
    <ligand>
        <name>acetyl-CoA</name>
        <dbReference type="ChEBI" id="CHEBI:57288"/>
    </ligand>
</feature>
<feature type="binding site" evidence="1">
    <location>
        <position position="337"/>
    </location>
    <ligand>
        <name>glyoxylate</name>
        <dbReference type="ChEBI" id="CHEBI:36655"/>
    </ligand>
</feature>
<feature type="binding site" evidence="1">
    <location>
        <position position="429"/>
    </location>
    <ligand>
        <name>glyoxylate</name>
        <dbReference type="ChEBI" id="CHEBI:36655"/>
    </ligand>
</feature>
<feature type="binding site" evidence="1">
    <location>
        <position position="429"/>
    </location>
    <ligand>
        <name>Mg(2+)</name>
        <dbReference type="ChEBI" id="CHEBI:18420"/>
    </ligand>
</feature>
<feature type="binding site" evidence="1">
    <location>
        <begin position="454"/>
        <end position="457"/>
    </location>
    <ligand>
        <name>glyoxylate</name>
        <dbReference type="ChEBI" id="CHEBI:36655"/>
    </ligand>
</feature>
<feature type="binding site" evidence="1">
    <location>
        <position position="457"/>
    </location>
    <ligand>
        <name>Mg(2+)</name>
        <dbReference type="ChEBI" id="CHEBI:18420"/>
    </ligand>
</feature>
<feature type="binding site" evidence="1">
    <location>
        <position position="538"/>
    </location>
    <ligand>
        <name>acetyl-CoA</name>
        <dbReference type="ChEBI" id="CHEBI:57288"/>
    </ligand>
</feature>
<feature type="modified residue" description="Cysteine sulfenic acid (-SOH)" evidence="1">
    <location>
        <position position="614"/>
    </location>
</feature>
<gene>
    <name evidence="1" type="primary">glcB</name>
    <name type="ordered locus">Nwi_2765</name>
</gene>
<name>MASZ_NITWN</name>
<organism>
    <name type="scientific">Nitrobacter winogradskyi (strain ATCC 25391 / DSM 10237 / CIP 104748 / NCIMB 11846 / Nb-255)</name>
    <dbReference type="NCBI Taxonomy" id="323098"/>
    <lineage>
        <taxon>Bacteria</taxon>
        <taxon>Pseudomonadati</taxon>
        <taxon>Pseudomonadota</taxon>
        <taxon>Alphaproteobacteria</taxon>
        <taxon>Hyphomicrobiales</taxon>
        <taxon>Nitrobacteraceae</taxon>
        <taxon>Nitrobacter</taxon>
    </lineage>
</organism>
<keyword id="KW-0963">Cytoplasm</keyword>
<keyword id="KW-0329">Glyoxylate bypass</keyword>
<keyword id="KW-0460">Magnesium</keyword>
<keyword id="KW-0479">Metal-binding</keyword>
<keyword id="KW-0558">Oxidation</keyword>
<keyword id="KW-1185">Reference proteome</keyword>
<keyword id="KW-0808">Transferase</keyword>
<keyword id="KW-0816">Tricarboxylic acid cycle</keyword>
<proteinExistence type="inferred from homology"/>
<evidence type="ECO:0000255" key="1">
    <source>
        <dbReference type="HAMAP-Rule" id="MF_00641"/>
    </source>
</evidence>
<comment type="function">
    <text evidence="1">Involved in the glycolate utilization. Catalyzes the condensation and subsequent hydrolysis of acetyl-coenzyme A (acetyl-CoA) and glyoxylate to form malate and CoA.</text>
</comment>
<comment type="catalytic activity">
    <reaction evidence="1">
        <text>glyoxylate + acetyl-CoA + H2O = (S)-malate + CoA + H(+)</text>
        <dbReference type="Rhea" id="RHEA:18181"/>
        <dbReference type="ChEBI" id="CHEBI:15377"/>
        <dbReference type="ChEBI" id="CHEBI:15378"/>
        <dbReference type="ChEBI" id="CHEBI:15589"/>
        <dbReference type="ChEBI" id="CHEBI:36655"/>
        <dbReference type="ChEBI" id="CHEBI:57287"/>
        <dbReference type="ChEBI" id="CHEBI:57288"/>
        <dbReference type="EC" id="2.3.3.9"/>
    </reaction>
</comment>
<comment type="cofactor">
    <cofactor evidence="1">
        <name>Mg(2+)</name>
        <dbReference type="ChEBI" id="CHEBI:18420"/>
    </cofactor>
</comment>
<comment type="pathway">
    <text evidence="1">Carbohydrate metabolism; glyoxylate cycle; (S)-malate from isocitrate: step 2/2.</text>
</comment>
<comment type="subunit">
    <text evidence="1">Monomer.</text>
</comment>
<comment type="subcellular location">
    <subcellularLocation>
        <location evidence="1">Cytoplasm</location>
    </subcellularLocation>
</comment>
<comment type="similarity">
    <text evidence="1">Belongs to the malate synthase family. GlcB subfamily.</text>
</comment>
<reference key="1">
    <citation type="journal article" date="2006" name="Appl. Environ. Microbiol.">
        <title>Genome sequence of the chemolithoautotrophic nitrite-oxidizing bacterium Nitrobacter winogradskyi Nb-255.</title>
        <authorList>
            <person name="Starkenburg S.R."/>
            <person name="Chain P.S.G."/>
            <person name="Sayavedra-Soto L.A."/>
            <person name="Hauser L."/>
            <person name="Land M.L."/>
            <person name="Larimer F.W."/>
            <person name="Malfatti S.A."/>
            <person name="Klotz M.G."/>
            <person name="Bottomley P.J."/>
            <person name="Arp D.J."/>
            <person name="Hickey W.J."/>
        </authorList>
    </citation>
    <scope>NUCLEOTIDE SEQUENCE [LARGE SCALE GENOMIC DNA]</scope>
    <source>
        <strain>ATCC 25391 / DSM 10237 / CIP 104748 / NCIMB 11846 / Nb-255</strain>
    </source>
</reference>
<protein>
    <recommendedName>
        <fullName evidence="1">Malate synthase G</fullName>
        <ecNumber evidence="1">2.3.3.9</ecNumber>
    </recommendedName>
</protein>
<accession>Q3SNX3</accession>